<feature type="chain" id="PRO_0000217762" description="Circadian clock oscillator protein KaiB">
    <location>
        <begin position="1"/>
        <end position="117"/>
    </location>
</feature>
<dbReference type="EMBL" id="AE017126">
    <property type="protein sequence ID" value="AAQ00468.1"/>
    <property type="molecule type" value="Genomic_DNA"/>
</dbReference>
<dbReference type="RefSeq" id="NP_875815.1">
    <property type="nucleotide sequence ID" value="NC_005042.1"/>
</dbReference>
<dbReference type="RefSeq" id="WP_011125575.1">
    <property type="nucleotide sequence ID" value="NC_005042.1"/>
</dbReference>
<dbReference type="SMR" id="Q7VAN4"/>
<dbReference type="STRING" id="167539.Pro_1424"/>
<dbReference type="EnsemblBacteria" id="AAQ00468">
    <property type="protein sequence ID" value="AAQ00468"/>
    <property type="gene ID" value="Pro_1424"/>
</dbReference>
<dbReference type="KEGG" id="pma:Pro_1424"/>
<dbReference type="PATRIC" id="fig|167539.5.peg.1490"/>
<dbReference type="eggNOG" id="COG4251">
    <property type="taxonomic scope" value="Bacteria"/>
</dbReference>
<dbReference type="HOGENOM" id="CLU_144073_0_0_3"/>
<dbReference type="OrthoDB" id="5458519at2"/>
<dbReference type="Proteomes" id="UP000001420">
    <property type="component" value="Chromosome"/>
</dbReference>
<dbReference type="GO" id="GO:0007623">
    <property type="term" value="P:circadian rhythm"/>
    <property type="evidence" value="ECO:0007669"/>
    <property type="project" value="UniProtKB-UniRule"/>
</dbReference>
<dbReference type="CDD" id="cd02978">
    <property type="entry name" value="KaiB_like"/>
    <property type="match status" value="1"/>
</dbReference>
<dbReference type="Gene3D" id="3.40.30.10">
    <property type="entry name" value="Glutaredoxin"/>
    <property type="match status" value="1"/>
</dbReference>
<dbReference type="HAMAP" id="MF_01835">
    <property type="entry name" value="KaiB"/>
    <property type="match status" value="1"/>
</dbReference>
<dbReference type="InterPro" id="IPR013474">
    <property type="entry name" value="Circ_KaiB"/>
</dbReference>
<dbReference type="InterPro" id="IPR039022">
    <property type="entry name" value="KaiB-like"/>
</dbReference>
<dbReference type="InterPro" id="IPR011649">
    <property type="entry name" value="KaiB_domain"/>
</dbReference>
<dbReference type="InterPro" id="IPR036249">
    <property type="entry name" value="Thioredoxin-like_sf"/>
</dbReference>
<dbReference type="NCBIfam" id="TIGR02654">
    <property type="entry name" value="circ_KaiB"/>
    <property type="match status" value="1"/>
</dbReference>
<dbReference type="NCBIfam" id="NF006798">
    <property type="entry name" value="PRK09301.1"/>
    <property type="match status" value="1"/>
</dbReference>
<dbReference type="PANTHER" id="PTHR41709:SF2">
    <property type="entry name" value="CIRCADIAN CLOCK PROTEIN KAIB2"/>
    <property type="match status" value="1"/>
</dbReference>
<dbReference type="PANTHER" id="PTHR41709">
    <property type="entry name" value="KAIB-LIKE PROTEIN 1"/>
    <property type="match status" value="1"/>
</dbReference>
<dbReference type="Pfam" id="PF07689">
    <property type="entry name" value="KaiB"/>
    <property type="match status" value="1"/>
</dbReference>
<dbReference type="SMART" id="SM01248">
    <property type="entry name" value="KaiB"/>
    <property type="match status" value="1"/>
</dbReference>
<dbReference type="SUPFAM" id="SSF52833">
    <property type="entry name" value="Thioredoxin-like"/>
    <property type="match status" value="1"/>
</dbReference>
<evidence type="ECO:0000255" key="1">
    <source>
        <dbReference type="HAMAP-Rule" id="MF_01835"/>
    </source>
</evidence>
<reference key="1">
    <citation type="journal article" date="2003" name="Proc. Natl. Acad. Sci. U.S.A.">
        <title>Genome sequence of the cyanobacterium Prochlorococcus marinus SS120, a nearly minimal oxyphototrophic genome.</title>
        <authorList>
            <person name="Dufresne A."/>
            <person name="Salanoubat M."/>
            <person name="Partensky F."/>
            <person name="Artiguenave F."/>
            <person name="Axmann I.M."/>
            <person name="Barbe V."/>
            <person name="Duprat S."/>
            <person name="Galperin M.Y."/>
            <person name="Koonin E.V."/>
            <person name="Le Gall F."/>
            <person name="Makarova K.S."/>
            <person name="Ostrowski M."/>
            <person name="Oztas S."/>
            <person name="Robert C."/>
            <person name="Rogozin I.B."/>
            <person name="Scanlan D.J."/>
            <person name="Tandeau de Marsac N."/>
            <person name="Weissenbach J."/>
            <person name="Wincker P."/>
            <person name="Wolf Y.I."/>
            <person name="Hess W.R."/>
        </authorList>
    </citation>
    <scope>NUCLEOTIDE SEQUENCE [LARGE SCALE GENOMIC DNA]</scope>
    <source>
        <strain>SARG / CCMP1375 / SS120</strain>
    </source>
</reference>
<organism>
    <name type="scientific">Prochlorococcus marinus (strain SARG / CCMP1375 / SS120)</name>
    <dbReference type="NCBI Taxonomy" id="167539"/>
    <lineage>
        <taxon>Bacteria</taxon>
        <taxon>Bacillati</taxon>
        <taxon>Cyanobacteriota</taxon>
        <taxon>Cyanophyceae</taxon>
        <taxon>Synechococcales</taxon>
        <taxon>Prochlorococcaceae</taxon>
        <taxon>Prochlorococcus</taxon>
    </lineage>
</organism>
<gene>
    <name evidence="1" type="primary">kaiB</name>
    <name type="ordered locus">Pro_1424</name>
</gene>
<name>KAIB_PROMA</name>
<sequence length="117" mass="13056">MSPRKTYILKLYVAGNTPNSMRALTTLREILQTDFKGVYALKVIDVLKNPQLAEEDKILATPTLAKILPPPVRRIIGDLSDRERVLIGLDLLFEELSESDFFSGSPDSEFSSDEGKS</sequence>
<accession>Q7VAN4</accession>
<protein>
    <recommendedName>
        <fullName evidence="1">Circadian clock oscillator protein KaiB</fullName>
    </recommendedName>
</protein>
<proteinExistence type="inferred from homology"/>
<keyword id="KW-0090">Biological rhythms</keyword>
<keyword id="KW-1185">Reference proteome</keyword>
<comment type="function">
    <text evidence="1">Component of the KaiBC clock protein complex, which constitutes the main circadian regulator in cyanobacteria; it may modify the ATPase activity of KaiC.</text>
</comment>
<comment type="function">
    <text evidence="1">May be a metamorphic protein which reversibly switches between an inactive tetrameric fold and a rare, thioredoxin-like monomeric fold (KaiB(fs)). KaiB(fs) binds phospho-KaiC, and perhaps clock output effectors.</text>
</comment>
<comment type="subunit">
    <text evidence="1">May undergo a major conformational rearrangment; in the free state forms homooligomers. When bound to KaiC switches to a monomeric thioredoxin-fold (KaiB(fs)). The active oscillator complex is probably KaiC(6):KaiB(6).</text>
</comment>
<comment type="domain">
    <text evidence="1">Has 2 forms, fold switches to a thioredoxin-like fold (KaiB(fs)) when bound to KaiC.</text>
</comment>
<comment type="miscellaneous">
    <text evidence="1">The kiaA gene has been eliminated from Prochlorococcus during genome streamlining. It has been suggested that the central oscillator in Prochlorococcus does not have to be as robust as in other cyanobacteria because the former live in specific niches of the Earth's oceans; they divide exactly once a day and at the same time. Thus gene loss and changes in kaiB function compared to other cyanobacteria, can occur.</text>
</comment>
<comment type="similarity">
    <text evidence="1">Belongs to the KaiB family.</text>
</comment>